<evidence type="ECO:0000255" key="1">
    <source>
        <dbReference type="HAMAP-Rule" id="MF_00017"/>
    </source>
</evidence>
<gene>
    <name evidence="1" type="primary">recR</name>
    <name type="ordered locus">LPC_3039</name>
</gene>
<proteinExistence type="inferred from homology"/>
<comment type="function">
    <text evidence="1">May play a role in DNA repair. It seems to be involved in an RecBC-independent recombinational process of DNA repair. It may act with RecF and RecO.</text>
</comment>
<comment type="similarity">
    <text evidence="1">Belongs to the RecR family.</text>
</comment>
<dbReference type="EMBL" id="CP000675">
    <property type="protein sequence ID" value="ABQ56930.1"/>
    <property type="molecule type" value="Genomic_DNA"/>
</dbReference>
<dbReference type="RefSeq" id="WP_011216607.1">
    <property type="nucleotide sequence ID" value="NZ_JAPMSS010000004.1"/>
</dbReference>
<dbReference type="SMR" id="A5IHT0"/>
<dbReference type="KEGG" id="lpc:LPC_3039"/>
<dbReference type="HOGENOM" id="CLU_060739_1_2_6"/>
<dbReference type="GO" id="GO:0003677">
    <property type="term" value="F:DNA binding"/>
    <property type="evidence" value="ECO:0007669"/>
    <property type="project" value="UniProtKB-UniRule"/>
</dbReference>
<dbReference type="GO" id="GO:0008270">
    <property type="term" value="F:zinc ion binding"/>
    <property type="evidence" value="ECO:0007669"/>
    <property type="project" value="UniProtKB-KW"/>
</dbReference>
<dbReference type="GO" id="GO:0006310">
    <property type="term" value="P:DNA recombination"/>
    <property type="evidence" value="ECO:0007669"/>
    <property type="project" value="UniProtKB-UniRule"/>
</dbReference>
<dbReference type="GO" id="GO:0006281">
    <property type="term" value="P:DNA repair"/>
    <property type="evidence" value="ECO:0007669"/>
    <property type="project" value="UniProtKB-UniRule"/>
</dbReference>
<dbReference type="CDD" id="cd01025">
    <property type="entry name" value="TOPRIM_recR"/>
    <property type="match status" value="1"/>
</dbReference>
<dbReference type="Gene3D" id="3.40.1360.10">
    <property type="match status" value="1"/>
</dbReference>
<dbReference type="Gene3D" id="1.10.8.420">
    <property type="entry name" value="RecR Domain 1"/>
    <property type="match status" value="1"/>
</dbReference>
<dbReference type="HAMAP" id="MF_00017">
    <property type="entry name" value="RecR"/>
    <property type="match status" value="1"/>
</dbReference>
<dbReference type="InterPro" id="IPR000093">
    <property type="entry name" value="DNA_Rcmb_RecR"/>
</dbReference>
<dbReference type="InterPro" id="IPR023627">
    <property type="entry name" value="Rcmb_RecR"/>
</dbReference>
<dbReference type="InterPro" id="IPR015967">
    <property type="entry name" value="Rcmb_RecR_Znf"/>
</dbReference>
<dbReference type="InterPro" id="IPR006171">
    <property type="entry name" value="TOPRIM_dom"/>
</dbReference>
<dbReference type="InterPro" id="IPR034137">
    <property type="entry name" value="TOPRIM_RecR"/>
</dbReference>
<dbReference type="NCBIfam" id="TIGR00615">
    <property type="entry name" value="recR"/>
    <property type="match status" value="1"/>
</dbReference>
<dbReference type="PANTHER" id="PTHR30446">
    <property type="entry name" value="RECOMBINATION PROTEIN RECR"/>
    <property type="match status" value="1"/>
</dbReference>
<dbReference type="PANTHER" id="PTHR30446:SF0">
    <property type="entry name" value="RECOMBINATION PROTEIN RECR"/>
    <property type="match status" value="1"/>
</dbReference>
<dbReference type="Pfam" id="PF21175">
    <property type="entry name" value="RecR_C"/>
    <property type="match status" value="1"/>
</dbReference>
<dbReference type="Pfam" id="PF21176">
    <property type="entry name" value="RecR_HhH"/>
    <property type="match status" value="1"/>
</dbReference>
<dbReference type="Pfam" id="PF02132">
    <property type="entry name" value="RecR_ZnF"/>
    <property type="match status" value="1"/>
</dbReference>
<dbReference type="Pfam" id="PF13662">
    <property type="entry name" value="Toprim_4"/>
    <property type="match status" value="1"/>
</dbReference>
<dbReference type="SMART" id="SM00493">
    <property type="entry name" value="TOPRIM"/>
    <property type="match status" value="1"/>
</dbReference>
<dbReference type="SUPFAM" id="SSF111304">
    <property type="entry name" value="Recombination protein RecR"/>
    <property type="match status" value="1"/>
</dbReference>
<dbReference type="PROSITE" id="PS01300">
    <property type="entry name" value="RECR"/>
    <property type="match status" value="1"/>
</dbReference>
<dbReference type="PROSITE" id="PS50880">
    <property type="entry name" value="TOPRIM"/>
    <property type="match status" value="1"/>
</dbReference>
<accession>A5IHT0</accession>
<reference key="1">
    <citation type="submission" date="2006-11" db="EMBL/GenBank/DDBJ databases">
        <title>Identification and characterization of a new conjugation/ type IVA secretion system (trb/tra) of L. pneumophila Corby localized on a mobile genomic island.</title>
        <authorList>
            <person name="Gloeckner G."/>
            <person name="Albert-Weissenberger C."/>
            <person name="Weinmann E."/>
            <person name="Jacobi S."/>
            <person name="Schunder E."/>
            <person name="Steinert M."/>
            <person name="Buchrieser C."/>
            <person name="Hacker J."/>
            <person name="Heuner K."/>
        </authorList>
    </citation>
    <scope>NUCLEOTIDE SEQUENCE [LARGE SCALE GENOMIC DNA]</scope>
    <source>
        <strain>Corby</strain>
    </source>
</reference>
<organism>
    <name type="scientific">Legionella pneumophila (strain Corby)</name>
    <dbReference type="NCBI Taxonomy" id="400673"/>
    <lineage>
        <taxon>Bacteria</taxon>
        <taxon>Pseudomonadati</taxon>
        <taxon>Pseudomonadota</taxon>
        <taxon>Gammaproteobacteria</taxon>
        <taxon>Legionellales</taxon>
        <taxon>Legionellaceae</taxon>
        <taxon>Legionella</taxon>
    </lineage>
</organism>
<keyword id="KW-0227">DNA damage</keyword>
<keyword id="KW-0233">DNA recombination</keyword>
<keyword id="KW-0234">DNA repair</keyword>
<keyword id="KW-0479">Metal-binding</keyword>
<keyword id="KW-0862">Zinc</keyword>
<keyword id="KW-0863">Zinc-finger</keyword>
<sequence length="197" mass="21705">MDALSRLVEALRCLPGVGPKSAQRMVFHLLQHQRQRGLHLASCLEQAMKHISHCQQCNNYTEQTLCTLCQNPNRDSTLLCVVESPADVSAIEQSNSFQGKYFVLMGKISPLDGLGPDDIGLPKLKELIIREKIQEVILALSPSVESQTTIHFIHQLLKDETVNISQLAHGIPSGGELEFLDGNTISSALKNRAVINV</sequence>
<protein>
    <recommendedName>
        <fullName evidence="1">Recombination protein RecR</fullName>
    </recommendedName>
</protein>
<feature type="chain" id="PRO_0000322901" description="Recombination protein RecR">
    <location>
        <begin position="1"/>
        <end position="197"/>
    </location>
</feature>
<feature type="domain" description="Toprim" evidence="1">
    <location>
        <begin position="77"/>
        <end position="172"/>
    </location>
</feature>
<feature type="zinc finger region" description="C4-type" evidence="1">
    <location>
        <begin position="54"/>
        <end position="69"/>
    </location>
</feature>
<name>RECR_LEGPC</name>